<organism>
    <name type="scientific">Homo sapiens</name>
    <name type="common">Human</name>
    <dbReference type="NCBI Taxonomy" id="9606"/>
    <lineage>
        <taxon>Eukaryota</taxon>
        <taxon>Metazoa</taxon>
        <taxon>Chordata</taxon>
        <taxon>Craniata</taxon>
        <taxon>Vertebrata</taxon>
        <taxon>Euteleostomi</taxon>
        <taxon>Mammalia</taxon>
        <taxon>Eutheria</taxon>
        <taxon>Euarchontoglires</taxon>
        <taxon>Primates</taxon>
        <taxon>Haplorrhini</taxon>
        <taxon>Catarrhini</taxon>
        <taxon>Hominidae</taxon>
        <taxon>Homo</taxon>
    </lineage>
</organism>
<proteinExistence type="evidence at transcript level"/>
<keyword id="KW-0025">Alternative splicing</keyword>
<keyword id="KW-0433">Leucine-rich repeat</keyword>
<keyword id="KW-1185">Reference proteome</keyword>
<keyword id="KW-0677">Repeat</keyword>
<evidence type="ECO:0000250" key="1">
    <source>
        <dbReference type="UniProtKB" id="Q7TPD7"/>
    </source>
</evidence>
<evidence type="ECO:0000256" key="2">
    <source>
        <dbReference type="SAM" id="MobiDB-lite"/>
    </source>
</evidence>
<evidence type="ECO:0000303" key="3">
    <source>
    </source>
</evidence>
<evidence type="ECO:0000305" key="4"/>
<evidence type="ECO:0000312" key="5">
    <source>
        <dbReference type="HGNC" id="HGNC:33155"/>
    </source>
</evidence>
<comment type="function">
    <text evidence="1">May suppress myogenic differentiation by modulating MYOG expression and Erk1/2 signaling.</text>
</comment>
<comment type="alternative products">
    <event type="alternative splicing"/>
    <isoform>
        <id>Q2VPJ9-1</id>
        <name>1</name>
        <sequence type="displayed"/>
    </isoform>
    <isoform>
        <id>Q2VPJ9-2</id>
        <name>2</name>
        <sequence type="described" ref="VSP_021172 VSP_021173"/>
    </isoform>
</comment>
<comment type="similarity">
    <text evidence="4">Belongs to the LRRC75 family.</text>
</comment>
<gene>
    <name evidence="5" type="primary">LRRC75B</name>
    <name type="synonym">C22orf36</name>
    <name type="synonym">FAM211B</name>
</gene>
<dbReference type="EMBL" id="AK097054">
    <property type="protein sequence ID" value="BAC04937.1"/>
    <property type="molecule type" value="mRNA"/>
</dbReference>
<dbReference type="EMBL" id="BC032388">
    <property type="protein sequence ID" value="AAH32388.1"/>
    <property type="molecule type" value="mRNA"/>
</dbReference>
<dbReference type="EMBL" id="BC108684">
    <property type="protein sequence ID" value="AAI08685.1"/>
    <property type="molecule type" value="mRNA"/>
</dbReference>
<dbReference type="CCDS" id="CCDS42991.1">
    <molecule id="Q2VPJ9-1"/>
</dbReference>
<dbReference type="RefSeq" id="NP_997527.2">
    <molecule id="Q2VPJ9-1"/>
    <property type="nucleotide sequence ID" value="NM_207644.3"/>
</dbReference>
<dbReference type="SMR" id="Q2VPJ9"/>
<dbReference type="BioGRID" id="132882">
    <property type="interactions" value="2"/>
</dbReference>
<dbReference type="FunCoup" id="Q2VPJ9">
    <property type="interactions" value="9"/>
</dbReference>
<dbReference type="STRING" id="9606.ENSP00000320520"/>
<dbReference type="GlyGen" id="Q2VPJ9">
    <property type="glycosylation" value="1 site, 1 O-linked glycan (1 site)"/>
</dbReference>
<dbReference type="iPTMnet" id="Q2VPJ9"/>
<dbReference type="PhosphoSitePlus" id="Q2VPJ9"/>
<dbReference type="BioMuta" id="LRRC75B"/>
<dbReference type="DMDM" id="118573588"/>
<dbReference type="MassIVE" id="Q2VPJ9"/>
<dbReference type="PaxDb" id="9606-ENSP00000320520"/>
<dbReference type="PeptideAtlas" id="Q2VPJ9"/>
<dbReference type="Antibodypedia" id="265">
    <property type="antibodies" value="57 antibodies from 13 providers"/>
</dbReference>
<dbReference type="DNASU" id="388886"/>
<dbReference type="Ensembl" id="ENST00000318753.13">
    <molecule id="Q2VPJ9-1"/>
    <property type="protein sequence ID" value="ENSP00000320520.8"/>
    <property type="gene ID" value="ENSG00000178026.13"/>
</dbReference>
<dbReference type="GeneID" id="388886"/>
<dbReference type="KEGG" id="hsa:388886"/>
<dbReference type="MANE-Select" id="ENST00000318753.13">
    <property type="protein sequence ID" value="ENSP00000320520.8"/>
    <property type="RefSeq nucleotide sequence ID" value="NM_207644.3"/>
    <property type="RefSeq protein sequence ID" value="NP_997527.2"/>
</dbReference>
<dbReference type="UCSC" id="uc003aaq.3">
    <molecule id="Q2VPJ9-1"/>
    <property type="organism name" value="human"/>
</dbReference>
<dbReference type="AGR" id="HGNC:33155"/>
<dbReference type="CTD" id="388886"/>
<dbReference type="DisGeNET" id="388886"/>
<dbReference type="GeneCards" id="LRRC75B"/>
<dbReference type="HGNC" id="HGNC:33155">
    <property type="gene designation" value="LRRC75B"/>
</dbReference>
<dbReference type="HPA" id="ENSG00000178026">
    <property type="expression patterns" value="Tissue enhanced (brain)"/>
</dbReference>
<dbReference type="neXtProt" id="NX_Q2VPJ9"/>
<dbReference type="OpenTargets" id="ENSG00000178026"/>
<dbReference type="PharmGKB" id="PA162378982"/>
<dbReference type="VEuPathDB" id="HostDB:ENSG00000178026"/>
<dbReference type="eggNOG" id="ENOG502QRJY">
    <property type="taxonomic scope" value="Eukaryota"/>
</dbReference>
<dbReference type="GeneTree" id="ENSGT00940000162815"/>
<dbReference type="HOGENOM" id="CLU_050536_2_0_1"/>
<dbReference type="InParanoid" id="Q2VPJ9"/>
<dbReference type="OMA" id="SEPQACC"/>
<dbReference type="OrthoDB" id="9979103at2759"/>
<dbReference type="PAN-GO" id="Q2VPJ9">
    <property type="GO annotations" value="1 GO annotation based on evolutionary models"/>
</dbReference>
<dbReference type="PhylomeDB" id="Q2VPJ9"/>
<dbReference type="TreeFam" id="TF332831"/>
<dbReference type="PathwayCommons" id="Q2VPJ9"/>
<dbReference type="BioGRID-ORCS" id="388886">
    <property type="hits" value="16 hits in 1148 CRISPR screens"/>
</dbReference>
<dbReference type="GenomeRNAi" id="388886"/>
<dbReference type="Pharos" id="Q2VPJ9">
    <property type="development level" value="Tdark"/>
</dbReference>
<dbReference type="PRO" id="PR:Q2VPJ9"/>
<dbReference type="Proteomes" id="UP000005640">
    <property type="component" value="Chromosome 22"/>
</dbReference>
<dbReference type="RNAct" id="Q2VPJ9">
    <property type="molecule type" value="protein"/>
</dbReference>
<dbReference type="Bgee" id="ENSG00000178026">
    <property type="expression patterns" value="Expressed in kidney epithelium and 157 other cell types or tissues"/>
</dbReference>
<dbReference type="ExpressionAtlas" id="Q2VPJ9">
    <property type="expression patterns" value="baseline and differential"/>
</dbReference>
<dbReference type="FunFam" id="3.80.10.10:FF:000158">
    <property type="entry name" value="Leucine rich repeat containing 75A"/>
    <property type="match status" value="1"/>
</dbReference>
<dbReference type="Gene3D" id="3.80.10.10">
    <property type="entry name" value="Ribonuclease Inhibitor"/>
    <property type="match status" value="1"/>
</dbReference>
<dbReference type="InterPro" id="IPR032675">
    <property type="entry name" value="LRR_dom_sf"/>
</dbReference>
<dbReference type="PANTHER" id="PTHR39654">
    <property type="entry name" value="LEUCINE-RICH REPEAT-CONTAINING PROTEIN 75A-LIKE ISOFORM X1"/>
    <property type="match status" value="1"/>
</dbReference>
<dbReference type="PANTHER" id="PTHR39654:SF5">
    <property type="entry name" value="LEUCINE-RICH REPEAT-CONTAINING PROTEIN 75B"/>
    <property type="match status" value="1"/>
</dbReference>
<dbReference type="SUPFAM" id="SSF52047">
    <property type="entry name" value="RNI-like"/>
    <property type="match status" value="1"/>
</dbReference>
<protein>
    <recommendedName>
        <fullName evidence="4">Leucine-rich repeat-containing protein 75B</fullName>
    </recommendedName>
    <alternativeName>
        <fullName>Leucine-rich repeat-containing protein FAM211B</fullName>
    </alternativeName>
</protein>
<sequence length="315" mass="34740">MGARLGRRAGPEAGSEAGAAAGCGPAPYERRVRWLREIQSTLRERRPERARQLLRLLRQDLGLERTLLPDILYRDVAFLNPVDPISHDLLVNLARDLQCPKKDYELWKSSDKICRQLIYHLTPHSKQQQGSSLRQRKTQSCLKSSLQKTLLAGETVDLSGIPLSTQDVQHITRYLSSHGAVLAVLDLSFTGLSDELLHLLLPSLWALPRLTQLLLNGNRLTRATARKLTDAIKDTTKFPALAWVDLGNNVDVASLPQPLLVGLRRRLSQRTSLPTIYEGLDLEPEGSAAGATTPASTWDSTAAGLGPEPQACCAR</sequence>
<accession>Q2VPJ9</accession>
<accession>Q8N0S9</accession>
<accession>Q8N8B1</accession>
<feature type="chain" id="PRO_0000254046" description="Leucine-rich repeat-containing protein 75B">
    <location>
        <begin position="1"/>
        <end position="315"/>
    </location>
</feature>
<feature type="repeat" description="LRR 1">
    <location>
        <begin position="182"/>
        <end position="195"/>
    </location>
</feature>
<feature type="repeat" description="LRR 2">
    <location>
        <begin position="207"/>
        <end position="220"/>
    </location>
</feature>
<feature type="region of interest" description="Disordered" evidence="2">
    <location>
        <begin position="1"/>
        <end position="23"/>
    </location>
</feature>
<feature type="region of interest" description="Disordered" evidence="2">
    <location>
        <begin position="284"/>
        <end position="315"/>
    </location>
</feature>
<feature type="compositionally biased region" description="Low complexity" evidence="2">
    <location>
        <begin position="11"/>
        <end position="23"/>
    </location>
</feature>
<feature type="compositionally biased region" description="Low complexity" evidence="2">
    <location>
        <begin position="286"/>
        <end position="297"/>
    </location>
</feature>
<feature type="splice variant" id="VSP_021172" description="In isoform 2." evidence="3">
    <original>DLGLERTLLPDILYRDVAFLNPVDPISHDLLVNLARDLQCPKKDYELWKSSDKICRQLIYHLTPHSKQQQGSSLRQRKTQSCLKSSLQKTLLA</original>
    <variation>AREGAVRPWAGGQGGSGGLGVWEARGYGLWACIRREARRSWSLARAGGFRGRDRLQHAGSCVGERATAWSEGWVRSADRVEEGAAECVRVFGV</variation>
    <location>
        <begin position="60"/>
        <end position="152"/>
    </location>
</feature>
<feature type="splice variant" id="VSP_021173" description="In isoform 2." evidence="3">
    <location>
        <begin position="153"/>
        <end position="315"/>
    </location>
</feature>
<feature type="sequence variant" id="VAR_051125" description="In dbSNP:rs743370.">
    <original>S</original>
    <variation>R</variation>
    <location>
        <position position="140"/>
    </location>
</feature>
<reference key="1">
    <citation type="journal article" date="2004" name="Nat. Genet.">
        <title>Complete sequencing and characterization of 21,243 full-length human cDNAs.</title>
        <authorList>
            <person name="Ota T."/>
            <person name="Suzuki Y."/>
            <person name="Nishikawa T."/>
            <person name="Otsuki T."/>
            <person name="Sugiyama T."/>
            <person name="Irie R."/>
            <person name="Wakamatsu A."/>
            <person name="Hayashi K."/>
            <person name="Sato H."/>
            <person name="Nagai K."/>
            <person name="Kimura K."/>
            <person name="Makita H."/>
            <person name="Sekine M."/>
            <person name="Obayashi M."/>
            <person name="Nishi T."/>
            <person name="Shibahara T."/>
            <person name="Tanaka T."/>
            <person name="Ishii S."/>
            <person name="Yamamoto J."/>
            <person name="Saito K."/>
            <person name="Kawai Y."/>
            <person name="Isono Y."/>
            <person name="Nakamura Y."/>
            <person name="Nagahari K."/>
            <person name="Murakami K."/>
            <person name="Yasuda T."/>
            <person name="Iwayanagi T."/>
            <person name="Wagatsuma M."/>
            <person name="Shiratori A."/>
            <person name="Sudo H."/>
            <person name="Hosoiri T."/>
            <person name="Kaku Y."/>
            <person name="Kodaira H."/>
            <person name="Kondo H."/>
            <person name="Sugawara M."/>
            <person name="Takahashi M."/>
            <person name="Kanda K."/>
            <person name="Yokoi T."/>
            <person name="Furuya T."/>
            <person name="Kikkawa E."/>
            <person name="Omura Y."/>
            <person name="Abe K."/>
            <person name="Kamihara K."/>
            <person name="Katsuta N."/>
            <person name="Sato K."/>
            <person name="Tanikawa M."/>
            <person name="Yamazaki M."/>
            <person name="Ninomiya K."/>
            <person name="Ishibashi T."/>
            <person name="Yamashita H."/>
            <person name="Murakawa K."/>
            <person name="Fujimori K."/>
            <person name="Tanai H."/>
            <person name="Kimata M."/>
            <person name="Watanabe M."/>
            <person name="Hiraoka S."/>
            <person name="Chiba Y."/>
            <person name="Ishida S."/>
            <person name="Ono Y."/>
            <person name="Takiguchi S."/>
            <person name="Watanabe S."/>
            <person name="Yosida M."/>
            <person name="Hotuta T."/>
            <person name="Kusano J."/>
            <person name="Kanehori K."/>
            <person name="Takahashi-Fujii A."/>
            <person name="Hara H."/>
            <person name="Tanase T.-O."/>
            <person name="Nomura Y."/>
            <person name="Togiya S."/>
            <person name="Komai F."/>
            <person name="Hara R."/>
            <person name="Takeuchi K."/>
            <person name="Arita M."/>
            <person name="Imose N."/>
            <person name="Musashino K."/>
            <person name="Yuuki H."/>
            <person name="Oshima A."/>
            <person name="Sasaki N."/>
            <person name="Aotsuka S."/>
            <person name="Yoshikawa Y."/>
            <person name="Matsunawa H."/>
            <person name="Ichihara T."/>
            <person name="Shiohata N."/>
            <person name="Sano S."/>
            <person name="Moriya S."/>
            <person name="Momiyama H."/>
            <person name="Satoh N."/>
            <person name="Takami S."/>
            <person name="Terashima Y."/>
            <person name="Suzuki O."/>
            <person name="Nakagawa S."/>
            <person name="Senoh A."/>
            <person name="Mizoguchi H."/>
            <person name="Goto Y."/>
            <person name="Shimizu F."/>
            <person name="Wakebe H."/>
            <person name="Hishigaki H."/>
            <person name="Watanabe T."/>
            <person name="Sugiyama A."/>
            <person name="Takemoto M."/>
            <person name="Kawakami B."/>
            <person name="Yamazaki M."/>
            <person name="Watanabe K."/>
            <person name="Kumagai A."/>
            <person name="Itakura S."/>
            <person name="Fukuzumi Y."/>
            <person name="Fujimori Y."/>
            <person name="Komiyama M."/>
            <person name="Tashiro H."/>
            <person name="Tanigami A."/>
            <person name="Fujiwara T."/>
            <person name="Ono T."/>
            <person name="Yamada K."/>
            <person name="Fujii Y."/>
            <person name="Ozaki K."/>
            <person name="Hirao M."/>
            <person name="Ohmori Y."/>
            <person name="Kawabata A."/>
            <person name="Hikiji T."/>
            <person name="Kobatake N."/>
            <person name="Inagaki H."/>
            <person name="Ikema Y."/>
            <person name="Okamoto S."/>
            <person name="Okitani R."/>
            <person name="Kawakami T."/>
            <person name="Noguchi S."/>
            <person name="Itoh T."/>
            <person name="Shigeta K."/>
            <person name="Senba T."/>
            <person name="Matsumura K."/>
            <person name="Nakajima Y."/>
            <person name="Mizuno T."/>
            <person name="Morinaga M."/>
            <person name="Sasaki M."/>
            <person name="Togashi T."/>
            <person name="Oyama M."/>
            <person name="Hata H."/>
            <person name="Watanabe M."/>
            <person name="Komatsu T."/>
            <person name="Mizushima-Sugano J."/>
            <person name="Satoh T."/>
            <person name="Shirai Y."/>
            <person name="Takahashi Y."/>
            <person name="Nakagawa K."/>
            <person name="Okumura K."/>
            <person name="Nagase T."/>
            <person name="Nomura N."/>
            <person name="Kikuchi H."/>
            <person name="Masuho Y."/>
            <person name="Yamashita R."/>
            <person name="Nakai K."/>
            <person name="Yada T."/>
            <person name="Nakamura Y."/>
            <person name="Ohara O."/>
            <person name="Isogai T."/>
            <person name="Sugano S."/>
        </authorList>
    </citation>
    <scope>NUCLEOTIDE SEQUENCE [LARGE SCALE MRNA] (ISOFORM 2)</scope>
    <source>
        <tissue>Small intestine</tissue>
    </source>
</reference>
<reference key="2">
    <citation type="journal article" date="2004" name="Genome Res.">
        <title>The status, quality, and expansion of the NIH full-length cDNA project: the Mammalian Gene Collection (MGC).</title>
        <authorList>
            <consortium name="The MGC Project Team"/>
        </authorList>
    </citation>
    <scope>NUCLEOTIDE SEQUENCE [LARGE SCALE MRNA] (ISOFORM 1)</scope>
    <source>
        <tissue>Brain</tissue>
        <tissue>Uterus</tissue>
    </source>
</reference>
<name>LR75B_HUMAN</name>